<name>RS14Z_THEM4</name>
<accession>A6LLM6</accession>
<dbReference type="EMBL" id="CP000716">
    <property type="protein sequence ID" value="ABR30827.1"/>
    <property type="molecule type" value="Genomic_DNA"/>
</dbReference>
<dbReference type="RefSeq" id="WP_012057188.1">
    <property type="nucleotide sequence ID" value="NC_009616.1"/>
</dbReference>
<dbReference type="SMR" id="A6LLM6"/>
<dbReference type="STRING" id="391009.Tmel_0966"/>
<dbReference type="KEGG" id="tme:Tmel_0966"/>
<dbReference type="eggNOG" id="COG0199">
    <property type="taxonomic scope" value="Bacteria"/>
</dbReference>
<dbReference type="HOGENOM" id="CLU_139869_3_0_0"/>
<dbReference type="OrthoDB" id="9810484at2"/>
<dbReference type="Proteomes" id="UP000001110">
    <property type="component" value="Chromosome"/>
</dbReference>
<dbReference type="GO" id="GO:0005737">
    <property type="term" value="C:cytoplasm"/>
    <property type="evidence" value="ECO:0007669"/>
    <property type="project" value="UniProtKB-ARBA"/>
</dbReference>
<dbReference type="GO" id="GO:0015935">
    <property type="term" value="C:small ribosomal subunit"/>
    <property type="evidence" value="ECO:0007669"/>
    <property type="project" value="TreeGrafter"/>
</dbReference>
<dbReference type="GO" id="GO:0019843">
    <property type="term" value="F:rRNA binding"/>
    <property type="evidence" value="ECO:0007669"/>
    <property type="project" value="UniProtKB-UniRule"/>
</dbReference>
<dbReference type="GO" id="GO:0003735">
    <property type="term" value="F:structural constituent of ribosome"/>
    <property type="evidence" value="ECO:0007669"/>
    <property type="project" value="InterPro"/>
</dbReference>
<dbReference type="GO" id="GO:0008270">
    <property type="term" value="F:zinc ion binding"/>
    <property type="evidence" value="ECO:0007669"/>
    <property type="project" value="UniProtKB-UniRule"/>
</dbReference>
<dbReference type="GO" id="GO:0006412">
    <property type="term" value="P:translation"/>
    <property type="evidence" value="ECO:0007669"/>
    <property type="project" value="UniProtKB-UniRule"/>
</dbReference>
<dbReference type="FunFam" id="4.10.830.10:FF:000001">
    <property type="entry name" value="30S ribosomal protein S14 type Z"/>
    <property type="match status" value="1"/>
</dbReference>
<dbReference type="Gene3D" id="4.10.830.10">
    <property type="entry name" value="30s Ribosomal Protein S14, Chain N"/>
    <property type="match status" value="1"/>
</dbReference>
<dbReference type="HAMAP" id="MF_01364_B">
    <property type="entry name" value="Ribosomal_uS14_2_B"/>
    <property type="match status" value="1"/>
</dbReference>
<dbReference type="InterPro" id="IPR001209">
    <property type="entry name" value="Ribosomal_uS14"/>
</dbReference>
<dbReference type="InterPro" id="IPR023053">
    <property type="entry name" value="Ribosomal_uS14_bact"/>
</dbReference>
<dbReference type="InterPro" id="IPR018271">
    <property type="entry name" value="Ribosomal_uS14_CS"/>
</dbReference>
<dbReference type="InterPro" id="IPR043140">
    <property type="entry name" value="Ribosomal_uS14_sf"/>
</dbReference>
<dbReference type="NCBIfam" id="NF005974">
    <property type="entry name" value="PRK08061.1"/>
    <property type="match status" value="1"/>
</dbReference>
<dbReference type="PANTHER" id="PTHR19836">
    <property type="entry name" value="30S RIBOSOMAL PROTEIN S14"/>
    <property type="match status" value="1"/>
</dbReference>
<dbReference type="PANTHER" id="PTHR19836:SF19">
    <property type="entry name" value="SMALL RIBOSOMAL SUBUNIT PROTEIN US14M"/>
    <property type="match status" value="1"/>
</dbReference>
<dbReference type="Pfam" id="PF00253">
    <property type="entry name" value="Ribosomal_S14"/>
    <property type="match status" value="1"/>
</dbReference>
<dbReference type="SUPFAM" id="SSF57716">
    <property type="entry name" value="Glucocorticoid receptor-like (DNA-binding domain)"/>
    <property type="match status" value="1"/>
</dbReference>
<dbReference type="PROSITE" id="PS00527">
    <property type="entry name" value="RIBOSOMAL_S14"/>
    <property type="match status" value="1"/>
</dbReference>
<protein>
    <recommendedName>
        <fullName evidence="1">Small ribosomal subunit protein uS14</fullName>
    </recommendedName>
    <alternativeName>
        <fullName evidence="2">30S ribosomal protein S14 type Z</fullName>
    </alternativeName>
</protein>
<gene>
    <name evidence="1" type="primary">rpsZ</name>
    <name evidence="1" type="synonym">rpsN</name>
    <name type="ordered locus">Tmel_0966</name>
</gene>
<proteinExistence type="inferred from homology"/>
<sequence>MARKGLVERWKKPKKFKTREYTRCKICGRTHSVYREFGVCRVCFRKMANEGKLPGVRKATW</sequence>
<keyword id="KW-0479">Metal-binding</keyword>
<keyword id="KW-0687">Ribonucleoprotein</keyword>
<keyword id="KW-0689">Ribosomal protein</keyword>
<keyword id="KW-0694">RNA-binding</keyword>
<keyword id="KW-0699">rRNA-binding</keyword>
<keyword id="KW-0862">Zinc</keyword>
<organism>
    <name type="scientific">Thermosipho melanesiensis (strain DSM 12029 / CIP 104789 / BI429)</name>
    <dbReference type="NCBI Taxonomy" id="391009"/>
    <lineage>
        <taxon>Bacteria</taxon>
        <taxon>Thermotogati</taxon>
        <taxon>Thermotogota</taxon>
        <taxon>Thermotogae</taxon>
        <taxon>Thermotogales</taxon>
        <taxon>Fervidobacteriaceae</taxon>
        <taxon>Thermosipho</taxon>
    </lineage>
</organism>
<evidence type="ECO:0000255" key="1">
    <source>
        <dbReference type="HAMAP-Rule" id="MF_01364"/>
    </source>
</evidence>
<evidence type="ECO:0000305" key="2"/>
<feature type="chain" id="PRO_1000067972" description="Small ribosomal subunit protein uS14">
    <location>
        <begin position="1"/>
        <end position="61"/>
    </location>
</feature>
<feature type="binding site" evidence="1">
    <location>
        <position position="24"/>
    </location>
    <ligand>
        <name>Zn(2+)</name>
        <dbReference type="ChEBI" id="CHEBI:29105"/>
    </ligand>
</feature>
<feature type="binding site" evidence="1">
    <location>
        <position position="27"/>
    </location>
    <ligand>
        <name>Zn(2+)</name>
        <dbReference type="ChEBI" id="CHEBI:29105"/>
    </ligand>
</feature>
<feature type="binding site" evidence="1">
    <location>
        <position position="40"/>
    </location>
    <ligand>
        <name>Zn(2+)</name>
        <dbReference type="ChEBI" id="CHEBI:29105"/>
    </ligand>
</feature>
<feature type="binding site" evidence="1">
    <location>
        <position position="43"/>
    </location>
    <ligand>
        <name>Zn(2+)</name>
        <dbReference type="ChEBI" id="CHEBI:29105"/>
    </ligand>
</feature>
<reference key="1">
    <citation type="submission" date="2007-05" db="EMBL/GenBank/DDBJ databases">
        <title>Complete sequence of Thermosipho melanesiensis BI429.</title>
        <authorList>
            <consortium name="US DOE Joint Genome Institute"/>
            <person name="Copeland A."/>
            <person name="Lucas S."/>
            <person name="Lapidus A."/>
            <person name="Barry K."/>
            <person name="Glavina del Rio T."/>
            <person name="Dalin E."/>
            <person name="Tice H."/>
            <person name="Pitluck S."/>
            <person name="Chertkov O."/>
            <person name="Brettin T."/>
            <person name="Bruce D."/>
            <person name="Detter J.C."/>
            <person name="Han C."/>
            <person name="Schmutz J."/>
            <person name="Larimer F."/>
            <person name="Land M."/>
            <person name="Hauser L."/>
            <person name="Kyrpides N."/>
            <person name="Mikhailova N."/>
            <person name="Nelson K."/>
            <person name="Gogarten J.P."/>
            <person name="Noll K."/>
            <person name="Richardson P."/>
        </authorList>
    </citation>
    <scope>NUCLEOTIDE SEQUENCE [LARGE SCALE GENOMIC DNA]</scope>
    <source>
        <strain>DSM 12029 / CIP 104789 / BI429</strain>
    </source>
</reference>
<comment type="function">
    <text evidence="1">Binds 16S rRNA, required for the assembly of 30S particles and may also be responsible for determining the conformation of the 16S rRNA at the A site.</text>
</comment>
<comment type="cofactor">
    <cofactor evidence="1">
        <name>Zn(2+)</name>
        <dbReference type="ChEBI" id="CHEBI:29105"/>
    </cofactor>
    <text evidence="1">Binds 1 zinc ion per subunit.</text>
</comment>
<comment type="subunit">
    <text evidence="1">Part of the 30S ribosomal subunit. Contacts proteins S3 and S10.</text>
</comment>
<comment type="similarity">
    <text evidence="1">Belongs to the universal ribosomal protein uS14 family. Zinc-binding uS14 subfamily.</text>
</comment>